<organism>
    <name type="scientific">Shewanella sp. (strain MR-4)</name>
    <dbReference type="NCBI Taxonomy" id="60480"/>
    <lineage>
        <taxon>Bacteria</taxon>
        <taxon>Pseudomonadati</taxon>
        <taxon>Pseudomonadota</taxon>
        <taxon>Gammaproteobacteria</taxon>
        <taxon>Alteromonadales</taxon>
        <taxon>Shewanellaceae</taxon>
        <taxon>Shewanella</taxon>
    </lineage>
</organism>
<accession>Q0HFL7</accession>
<reference key="1">
    <citation type="submission" date="2006-08" db="EMBL/GenBank/DDBJ databases">
        <title>Complete sequence of Shewanella sp. MR-4.</title>
        <authorList>
            <consortium name="US DOE Joint Genome Institute"/>
            <person name="Copeland A."/>
            <person name="Lucas S."/>
            <person name="Lapidus A."/>
            <person name="Barry K."/>
            <person name="Detter J.C."/>
            <person name="Glavina del Rio T."/>
            <person name="Hammon N."/>
            <person name="Israni S."/>
            <person name="Dalin E."/>
            <person name="Tice H."/>
            <person name="Pitluck S."/>
            <person name="Kiss H."/>
            <person name="Brettin T."/>
            <person name="Bruce D."/>
            <person name="Han C."/>
            <person name="Tapia R."/>
            <person name="Gilna P."/>
            <person name="Schmutz J."/>
            <person name="Larimer F."/>
            <person name="Land M."/>
            <person name="Hauser L."/>
            <person name="Kyrpides N."/>
            <person name="Mikhailova N."/>
            <person name="Nealson K."/>
            <person name="Konstantinidis K."/>
            <person name="Klappenbach J."/>
            <person name="Tiedje J."/>
            <person name="Richardson P."/>
        </authorList>
    </citation>
    <scope>NUCLEOTIDE SEQUENCE [LARGE SCALE GENOMIC DNA]</scope>
    <source>
        <strain>MR-4</strain>
    </source>
</reference>
<sequence length="565" mass="62985">MSEQKLALNEYLKTDSDYLRGTIKEGLDSSVTGSFSDGDQQLIKFHGFYQQDDRDLRNERKEQKLEPLYSFMLRARVPGGVCTPKQWLGVDEIASTLTSSNSIRLTTRQTFQYHGIPKRNLKTIIQGLDREALDSIAACGDVNRNVMCNPNPVESKLHAQAYEVAKKLSDHLLPHTRAYAEIWLDEEKLLTTEDETVEPVYGKTYLPRKFKMAVAVPPDNDVDVYTNDLGFIAVAENGELVGFNLTAGGGMGSTHGEVETFPRLADDFGFIKTEDVMKFAEAVMTVQRDWGNRTNRKRSRLKYTIVDHGYEKFKAEVEARAGVKFEPKRDVVIGDRGDRYGWVEGVDGKWHLTLFIESGRIKDVPGKSLQTGMREIAKIHKGDFRMTSNQNMIIAGVAPEDKATIEGLARKHGLLGQVLTQTRGHSIACVALPTCPLAMAEAERYFPEFIDHIDALQAKNGISDQAIVVRMTGCPNGCARPFAAEIGLVGKAPGRYNLYLGANFEGTRLNKMYRENIQEAEILAELDALFARYAIERNAGETFGNFTVRTGVVKAVIDAAKDFHG</sequence>
<proteinExistence type="inferred from homology"/>
<gene>
    <name evidence="1" type="primary">cysI</name>
    <name type="ordered locus">Shewmr4_3079</name>
</gene>
<keyword id="KW-0004">4Fe-4S</keyword>
<keyword id="KW-0028">Amino-acid biosynthesis</keyword>
<keyword id="KW-0198">Cysteine biosynthesis</keyword>
<keyword id="KW-0349">Heme</keyword>
<keyword id="KW-0408">Iron</keyword>
<keyword id="KW-0411">Iron-sulfur</keyword>
<keyword id="KW-0479">Metal-binding</keyword>
<keyword id="KW-0521">NADP</keyword>
<keyword id="KW-0560">Oxidoreductase</keyword>
<evidence type="ECO:0000255" key="1">
    <source>
        <dbReference type="HAMAP-Rule" id="MF_01540"/>
    </source>
</evidence>
<name>CYSI_SHESM</name>
<dbReference type="EC" id="1.8.1.2" evidence="1"/>
<dbReference type="EMBL" id="CP000446">
    <property type="protein sequence ID" value="ABI40150.1"/>
    <property type="molecule type" value="Genomic_DNA"/>
</dbReference>
<dbReference type="RefSeq" id="WP_011623823.1">
    <property type="nucleotide sequence ID" value="NC_008321.1"/>
</dbReference>
<dbReference type="SMR" id="Q0HFL7"/>
<dbReference type="KEGG" id="she:Shewmr4_3079"/>
<dbReference type="HOGENOM" id="CLU_001975_3_2_6"/>
<dbReference type="UniPathway" id="UPA00140">
    <property type="reaction ID" value="UER00207"/>
</dbReference>
<dbReference type="GO" id="GO:0009337">
    <property type="term" value="C:sulfite reductase complex (NADPH)"/>
    <property type="evidence" value="ECO:0007669"/>
    <property type="project" value="InterPro"/>
</dbReference>
<dbReference type="GO" id="GO:0051539">
    <property type="term" value="F:4 iron, 4 sulfur cluster binding"/>
    <property type="evidence" value="ECO:0007669"/>
    <property type="project" value="UniProtKB-KW"/>
</dbReference>
<dbReference type="GO" id="GO:0020037">
    <property type="term" value="F:heme binding"/>
    <property type="evidence" value="ECO:0007669"/>
    <property type="project" value="InterPro"/>
</dbReference>
<dbReference type="GO" id="GO:0046872">
    <property type="term" value="F:metal ion binding"/>
    <property type="evidence" value="ECO:0007669"/>
    <property type="project" value="UniProtKB-KW"/>
</dbReference>
<dbReference type="GO" id="GO:0050661">
    <property type="term" value="F:NADP binding"/>
    <property type="evidence" value="ECO:0007669"/>
    <property type="project" value="InterPro"/>
</dbReference>
<dbReference type="GO" id="GO:0050311">
    <property type="term" value="F:sulfite reductase (ferredoxin) activity"/>
    <property type="evidence" value="ECO:0007669"/>
    <property type="project" value="TreeGrafter"/>
</dbReference>
<dbReference type="GO" id="GO:0004783">
    <property type="term" value="F:sulfite reductase (NADPH) activity"/>
    <property type="evidence" value="ECO:0007669"/>
    <property type="project" value="UniProtKB-UniRule"/>
</dbReference>
<dbReference type="GO" id="GO:0019344">
    <property type="term" value="P:cysteine biosynthetic process"/>
    <property type="evidence" value="ECO:0007669"/>
    <property type="project" value="UniProtKB-KW"/>
</dbReference>
<dbReference type="GO" id="GO:0070814">
    <property type="term" value="P:hydrogen sulfide biosynthetic process"/>
    <property type="evidence" value="ECO:0007669"/>
    <property type="project" value="UniProtKB-UniRule"/>
</dbReference>
<dbReference type="GO" id="GO:0000103">
    <property type="term" value="P:sulfate assimilation"/>
    <property type="evidence" value="ECO:0007669"/>
    <property type="project" value="UniProtKB-UniRule"/>
</dbReference>
<dbReference type="FunFam" id="3.30.413.10:FF:000003">
    <property type="entry name" value="Sulfite reductase [NADPH] hemoprotein beta-component"/>
    <property type="match status" value="1"/>
</dbReference>
<dbReference type="FunFam" id="3.30.413.10:FF:000004">
    <property type="entry name" value="Sulfite reductase [NADPH] hemoprotein beta-component"/>
    <property type="match status" value="1"/>
</dbReference>
<dbReference type="Gene3D" id="3.30.413.10">
    <property type="entry name" value="Sulfite Reductase Hemoprotein, domain 1"/>
    <property type="match status" value="2"/>
</dbReference>
<dbReference type="HAMAP" id="MF_01540">
    <property type="entry name" value="CysI"/>
    <property type="match status" value="1"/>
</dbReference>
<dbReference type="InterPro" id="IPR011786">
    <property type="entry name" value="CysI"/>
</dbReference>
<dbReference type="InterPro" id="IPR005117">
    <property type="entry name" value="NiRdtase/SiRdtase_haem-b_fer"/>
</dbReference>
<dbReference type="InterPro" id="IPR036136">
    <property type="entry name" value="Nit/Sulf_reduc_fer-like_dom_sf"/>
</dbReference>
<dbReference type="InterPro" id="IPR006067">
    <property type="entry name" value="NO2/SO3_Rdtase_4Fe4S_dom"/>
</dbReference>
<dbReference type="InterPro" id="IPR045169">
    <property type="entry name" value="NO2/SO3_Rdtase_4Fe4S_prot"/>
</dbReference>
<dbReference type="InterPro" id="IPR045854">
    <property type="entry name" value="NO2/SO3_Rdtase_4Fe4S_sf"/>
</dbReference>
<dbReference type="InterPro" id="IPR006066">
    <property type="entry name" value="NO2/SO3_Rdtase_FeS/sirohaem_BS"/>
</dbReference>
<dbReference type="NCBIfam" id="TIGR02041">
    <property type="entry name" value="CysI"/>
    <property type="match status" value="1"/>
</dbReference>
<dbReference type="NCBIfam" id="NF010029">
    <property type="entry name" value="PRK13504.1"/>
    <property type="match status" value="1"/>
</dbReference>
<dbReference type="PANTHER" id="PTHR11493:SF47">
    <property type="entry name" value="SULFITE REDUCTASE [NADPH] SUBUNIT BETA"/>
    <property type="match status" value="1"/>
</dbReference>
<dbReference type="PANTHER" id="PTHR11493">
    <property type="entry name" value="SULFITE REDUCTASE [NADPH] SUBUNIT BETA-RELATED"/>
    <property type="match status" value="1"/>
</dbReference>
<dbReference type="Pfam" id="PF01077">
    <property type="entry name" value="NIR_SIR"/>
    <property type="match status" value="1"/>
</dbReference>
<dbReference type="Pfam" id="PF03460">
    <property type="entry name" value="NIR_SIR_ferr"/>
    <property type="match status" value="2"/>
</dbReference>
<dbReference type="PRINTS" id="PR00397">
    <property type="entry name" value="SIROHAEM"/>
</dbReference>
<dbReference type="SUPFAM" id="SSF56014">
    <property type="entry name" value="Nitrite and sulphite reductase 4Fe-4S domain-like"/>
    <property type="match status" value="2"/>
</dbReference>
<dbReference type="SUPFAM" id="SSF55124">
    <property type="entry name" value="Nitrite/Sulfite reductase N-terminal domain-like"/>
    <property type="match status" value="2"/>
</dbReference>
<dbReference type="PROSITE" id="PS00365">
    <property type="entry name" value="NIR_SIR"/>
    <property type="match status" value="1"/>
</dbReference>
<protein>
    <recommendedName>
        <fullName evidence="1">Sulfite reductase [NADPH] hemoprotein beta-component</fullName>
        <shortName evidence="1">SiR-HP</shortName>
        <shortName evidence="1">SiRHP</shortName>
        <ecNumber evidence="1">1.8.1.2</ecNumber>
    </recommendedName>
</protein>
<feature type="chain" id="PRO_1000068772" description="Sulfite reductase [NADPH] hemoprotein beta-component">
    <location>
        <begin position="1"/>
        <end position="565"/>
    </location>
</feature>
<feature type="binding site" evidence="1">
    <location>
        <position position="429"/>
    </location>
    <ligand>
        <name>[4Fe-4S] cluster</name>
        <dbReference type="ChEBI" id="CHEBI:49883"/>
    </ligand>
</feature>
<feature type="binding site" evidence="1">
    <location>
        <position position="435"/>
    </location>
    <ligand>
        <name>[4Fe-4S] cluster</name>
        <dbReference type="ChEBI" id="CHEBI:49883"/>
    </ligand>
</feature>
<feature type="binding site" evidence="1">
    <location>
        <position position="474"/>
    </location>
    <ligand>
        <name>[4Fe-4S] cluster</name>
        <dbReference type="ChEBI" id="CHEBI:49883"/>
    </ligand>
</feature>
<feature type="binding site" evidence="1">
    <location>
        <position position="478"/>
    </location>
    <ligand>
        <name>[4Fe-4S] cluster</name>
        <dbReference type="ChEBI" id="CHEBI:49883"/>
    </ligand>
</feature>
<feature type="binding site" description="axial binding residue" evidence="1">
    <location>
        <position position="478"/>
    </location>
    <ligand>
        <name>siroheme</name>
        <dbReference type="ChEBI" id="CHEBI:60052"/>
    </ligand>
    <ligandPart>
        <name>Fe</name>
        <dbReference type="ChEBI" id="CHEBI:18248"/>
    </ligandPart>
</feature>
<comment type="function">
    <text evidence="1">Component of the sulfite reductase complex that catalyzes the 6-electron reduction of sulfite to sulfide. This is one of several activities required for the biosynthesis of L-cysteine from sulfate.</text>
</comment>
<comment type="catalytic activity">
    <reaction evidence="1">
        <text>hydrogen sulfide + 3 NADP(+) + 3 H2O = sulfite + 3 NADPH + 4 H(+)</text>
        <dbReference type="Rhea" id="RHEA:13801"/>
        <dbReference type="ChEBI" id="CHEBI:15377"/>
        <dbReference type="ChEBI" id="CHEBI:15378"/>
        <dbReference type="ChEBI" id="CHEBI:17359"/>
        <dbReference type="ChEBI" id="CHEBI:29919"/>
        <dbReference type="ChEBI" id="CHEBI:57783"/>
        <dbReference type="ChEBI" id="CHEBI:58349"/>
        <dbReference type="EC" id="1.8.1.2"/>
    </reaction>
</comment>
<comment type="cofactor">
    <cofactor evidence="1">
        <name>siroheme</name>
        <dbReference type="ChEBI" id="CHEBI:60052"/>
    </cofactor>
    <text evidence="1">Binds 1 siroheme per subunit.</text>
</comment>
<comment type="cofactor">
    <cofactor evidence="1">
        <name>[4Fe-4S] cluster</name>
        <dbReference type="ChEBI" id="CHEBI:49883"/>
    </cofactor>
    <text evidence="1">Binds 1 [4Fe-4S] cluster per subunit.</text>
</comment>
<comment type="pathway">
    <text evidence="1">Sulfur metabolism; hydrogen sulfide biosynthesis; hydrogen sulfide from sulfite (NADPH route): step 1/1.</text>
</comment>
<comment type="subunit">
    <text evidence="1">Alpha(8)-beta(8). The alpha component is a flavoprotein, the beta component is a hemoprotein.</text>
</comment>
<comment type="similarity">
    <text evidence="1">Belongs to the nitrite and sulfite reductase 4Fe-4S domain family.</text>
</comment>